<proteinExistence type="evidence at protein level"/>
<organism>
    <name type="scientific">Homo sapiens</name>
    <name type="common">Human</name>
    <dbReference type="NCBI Taxonomy" id="9606"/>
    <lineage>
        <taxon>Eukaryota</taxon>
        <taxon>Metazoa</taxon>
        <taxon>Chordata</taxon>
        <taxon>Craniata</taxon>
        <taxon>Vertebrata</taxon>
        <taxon>Euteleostomi</taxon>
        <taxon>Mammalia</taxon>
        <taxon>Eutheria</taxon>
        <taxon>Euarchontoglires</taxon>
        <taxon>Primates</taxon>
        <taxon>Haplorrhini</taxon>
        <taxon>Catarrhini</taxon>
        <taxon>Hominidae</taxon>
        <taxon>Homo</taxon>
    </lineage>
</organism>
<name>BAG2_HUMAN</name>
<keyword id="KW-0007">Acetylation</keyword>
<keyword id="KW-0025">Alternative splicing</keyword>
<keyword id="KW-0143">Chaperone</keyword>
<keyword id="KW-0175">Coiled coil</keyword>
<keyword id="KW-0597">Phosphoprotein</keyword>
<keyword id="KW-1267">Proteomics identification</keyword>
<keyword id="KW-1185">Reference proteome</keyword>
<evidence type="ECO:0000255" key="1"/>
<evidence type="ECO:0000255" key="2">
    <source>
        <dbReference type="PROSITE-ProRule" id="PRU00369"/>
    </source>
</evidence>
<evidence type="ECO:0000269" key="3">
    <source>
    </source>
</evidence>
<evidence type="ECO:0000269" key="4">
    <source>
    </source>
</evidence>
<evidence type="ECO:0000269" key="5">
    <source>
    </source>
</evidence>
<evidence type="ECO:0000269" key="6">
    <source>
    </source>
</evidence>
<evidence type="ECO:0000303" key="7">
    <source>
    </source>
</evidence>
<evidence type="ECO:0000305" key="8"/>
<evidence type="ECO:0007744" key="9">
    <source>
    </source>
</evidence>
<evidence type="ECO:0007744" key="10">
    <source>
    </source>
</evidence>
<evidence type="ECO:0007744" key="11">
    <source>
    </source>
</evidence>
<evidence type="ECO:0007744" key="12">
    <source>
    </source>
</evidence>
<feature type="initiator methionine" description="Removed" evidence="11">
    <location>
        <position position="1"/>
    </location>
</feature>
<feature type="chain" id="PRO_0000088866" description="BAG family molecular chaperone regulator 2">
    <location>
        <begin position="2"/>
        <end position="211"/>
    </location>
</feature>
<feature type="domain" description="BAG" evidence="2">
    <location>
        <begin position="109"/>
        <end position="189"/>
    </location>
</feature>
<feature type="coiled-coil region" evidence="1">
    <location>
        <begin position="20"/>
        <end position="61"/>
    </location>
</feature>
<feature type="modified residue" description="N-acetylalanine" evidence="11">
    <location>
        <position position="2"/>
    </location>
</feature>
<feature type="modified residue" description="Phosphoserine" evidence="10">
    <location>
        <position position="20"/>
    </location>
</feature>
<feature type="modified residue" description="Phosphoserine" evidence="12">
    <location>
        <position position="31"/>
    </location>
</feature>
<feature type="modified residue" description="Phosphoserine" evidence="9 12">
    <location>
        <position position="73"/>
    </location>
</feature>
<feature type="splice variant" id="VSP_056462" description="In isoform 2." evidence="7">
    <original>MAQAKINAKANEGRFCRSSSMADRSSRLLESLDQLELR</original>
    <variation>MPHMW</variation>
    <location>
        <begin position="1"/>
        <end position="38"/>
    </location>
</feature>
<feature type="sequence conflict" description="In Ref. 4; CAG38527." evidence="8" ref="4">
    <original>N</original>
    <variation>D</variation>
    <location>
        <position position="180"/>
    </location>
</feature>
<dbReference type="EMBL" id="AF095192">
    <property type="protein sequence ID" value="AAD16121.1"/>
    <property type="molecule type" value="mRNA"/>
</dbReference>
<dbReference type="EMBL" id="AL050287">
    <property type="protein sequence ID" value="CAB43388.1"/>
    <property type="molecule type" value="mRNA"/>
</dbReference>
<dbReference type="EMBL" id="AK301934">
    <property type="protein sequence ID" value="BAG63354.1"/>
    <property type="molecule type" value="mRNA"/>
</dbReference>
<dbReference type="EMBL" id="CR533496">
    <property type="protein sequence ID" value="CAG38527.1"/>
    <property type="molecule type" value="mRNA"/>
</dbReference>
<dbReference type="EMBL" id="AL031321">
    <property type="status" value="NOT_ANNOTATED_CDS"/>
    <property type="molecule type" value="Genomic_DNA"/>
</dbReference>
<dbReference type="EMBL" id="AL136311">
    <property type="status" value="NOT_ANNOTATED_CDS"/>
    <property type="molecule type" value="Genomic_DNA"/>
</dbReference>
<dbReference type="EMBL" id="BC125039">
    <property type="protein sequence ID" value="AAI25040.1"/>
    <property type="molecule type" value="mRNA"/>
</dbReference>
<dbReference type="CCDS" id="CCDS4961.1">
    <molecule id="O95816-1"/>
</dbReference>
<dbReference type="PIR" id="T08764">
    <property type="entry name" value="T08764"/>
</dbReference>
<dbReference type="RefSeq" id="NP_004273.1">
    <molecule id="O95816-1"/>
    <property type="nucleotide sequence ID" value="NM_004282.4"/>
</dbReference>
<dbReference type="RefSeq" id="XP_005249547.1">
    <molecule id="O95816-2"/>
    <property type="nucleotide sequence ID" value="XM_005249490.5"/>
</dbReference>
<dbReference type="RefSeq" id="XP_011513300.1">
    <property type="nucleotide sequence ID" value="XM_011514998.2"/>
</dbReference>
<dbReference type="RefSeq" id="XP_011513301.1">
    <molecule id="O95816-2"/>
    <property type="nucleotide sequence ID" value="XM_011514999.4"/>
</dbReference>
<dbReference type="RefSeq" id="XP_054212829.1">
    <molecule id="O95816-2"/>
    <property type="nucleotide sequence ID" value="XM_054356854.1"/>
</dbReference>
<dbReference type="RefSeq" id="XP_054212830.1">
    <molecule id="O95816-2"/>
    <property type="nucleotide sequence ID" value="XM_054356855.1"/>
</dbReference>
<dbReference type="SMR" id="O95816"/>
<dbReference type="BioGRID" id="114908">
    <property type="interactions" value="680"/>
</dbReference>
<dbReference type="CORUM" id="O95816"/>
<dbReference type="FunCoup" id="O95816">
    <property type="interactions" value="2069"/>
</dbReference>
<dbReference type="IntAct" id="O95816">
    <property type="interactions" value="559"/>
</dbReference>
<dbReference type="MINT" id="O95816"/>
<dbReference type="STRING" id="9606.ENSP00000359727"/>
<dbReference type="GlyGen" id="O95816">
    <property type="glycosylation" value="1 site, 1 O-linked glycan (1 site)"/>
</dbReference>
<dbReference type="iPTMnet" id="O95816"/>
<dbReference type="MetOSite" id="O95816"/>
<dbReference type="PhosphoSitePlus" id="O95816"/>
<dbReference type="SwissPalm" id="O95816"/>
<dbReference type="BioMuta" id="BAG2"/>
<dbReference type="jPOST" id="O95816"/>
<dbReference type="MassIVE" id="O95816"/>
<dbReference type="PaxDb" id="9606-ENSP00000359727"/>
<dbReference type="PeptideAtlas" id="O95816"/>
<dbReference type="ProteomicsDB" id="51064">
    <molecule id="O95816-1"/>
</dbReference>
<dbReference type="ProteomicsDB" id="5430"/>
<dbReference type="Pumba" id="O95816"/>
<dbReference type="TopDownProteomics" id="O95816-1">
    <molecule id="O95816-1"/>
</dbReference>
<dbReference type="Antibodypedia" id="17541">
    <property type="antibodies" value="325 antibodies from 34 providers"/>
</dbReference>
<dbReference type="DNASU" id="9532"/>
<dbReference type="Ensembl" id="ENST00000370693.5">
    <molecule id="O95816-1"/>
    <property type="protein sequence ID" value="ENSP00000359727.4"/>
    <property type="gene ID" value="ENSG00000112208.11"/>
</dbReference>
<dbReference type="GeneID" id="9532"/>
<dbReference type="KEGG" id="hsa:9532"/>
<dbReference type="MANE-Select" id="ENST00000370693.5">
    <property type="protein sequence ID" value="ENSP00000359727.4"/>
    <property type="RefSeq nucleotide sequence ID" value="NM_004282.4"/>
    <property type="RefSeq protein sequence ID" value="NP_004273.1"/>
</dbReference>
<dbReference type="UCSC" id="uc003pdr.4">
    <molecule id="O95816-1"/>
    <property type="organism name" value="human"/>
</dbReference>
<dbReference type="AGR" id="HGNC:938"/>
<dbReference type="CTD" id="9532"/>
<dbReference type="DisGeNET" id="9532"/>
<dbReference type="GeneCards" id="BAG2"/>
<dbReference type="HGNC" id="HGNC:938">
    <property type="gene designation" value="BAG2"/>
</dbReference>
<dbReference type="HPA" id="ENSG00000112208">
    <property type="expression patterns" value="Tissue enhanced (intestine)"/>
</dbReference>
<dbReference type="MIM" id="603882">
    <property type="type" value="gene"/>
</dbReference>
<dbReference type="neXtProt" id="NX_O95816"/>
<dbReference type="OpenTargets" id="ENSG00000112208"/>
<dbReference type="PharmGKB" id="PA25238"/>
<dbReference type="VEuPathDB" id="HostDB:ENSG00000112208"/>
<dbReference type="eggNOG" id="KOG3633">
    <property type="taxonomic scope" value="Eukaryota"/>
</dbReference>
<dbReference type="GeneTree" id="ENSGT00390000017590"/>
<dbReference type="HOGENOM" id="CLU_072417_2_0_1"/>
<dbReference type="InParanoid" id="O95816"/>
<dbReference type="OMA" id="LHATKMI"/>
<dbReference type="OrthoDB" id="6284251at2759"/>
<dbReference type="PAN-GO" id="O95816">
    <property type="GO annotations" value="2 GO annotations based on evolutionary models"/>
</dbReference>
<dbReference type="PhylomeDB" id="O95816"/>
<dbReference type="TreeFam" id="TF102012"/>
<dbReference type="PathwayCommons" id="O95816"/>
<dbReference type="Reactome" id="R-HSA-3371453">
    <property type="pathway name" value="Regulation of HSF1-mediated heat shock response"/>
</dbReference>
<dbReference type="SignaLink" id="O95816"/>
<dbReference type="SIGNOR" id="O95816"/>
<dbReference type="BioGRID-ORCS" id="9532">
    <property type="hits" value="17 hits in 1150 CRISPR screens"/>
</dbReference>
<dbReference type="CD-CODE" id="4E66F2E3">
    <property type="entry name" value="BAG2"/>
</dbReference>
<dbReference type="ChiTaRS" id="BAG2">
    <property type="organism name" value="human"/>
</dbReference>
<dbReference type="GeneWiki" id="BAG2"/>
<dbReference type="GenomeRNAi" id="9532"/>
<dbReference type="Pharos" id="O95816">
    <property type="development level" value="Tbio"/>
</dbReference>
<dbReference type="PRO" id="PR:O95816"/>
<dbReference type="Proteomes" id="UP000005640">
    <property type="component" value="Chromosome 6"/>
</dbReference>
<dbReference type="RNAct" id="O95816">
    <property type="molecule type" value="protein"/>
</dbReference>
<dbReference type="Bgee" id="ENSG00000112208">
    <property type="expression patterns" value="Expressed in cauda epididymis and 170 other cell types or tissues"/>
</dbReference>
<dbReference type="GO" id="GO:0030424">
    <property type="term" value="C:axon"/>
    <property type="evidence" value="ECO:0000250"/>
    <property type="project" value="ARUK-UCL"/>
</dbReference>
<dbReference type="GO" id="GO:0005829">
    <property type="term" value="C:cytosol"/>
    <property type="evidence" value="ECO:0000304"/>
    <property type="project" value="Reactome"/>
</dbReference>
<dbReference type="GO" id="GO:0030425">
    <property type="term" value="C:dendrite"/>
    <property type="evidence" value="ECO:0000250"/>
    <property type="project" value="ARUK-UCL"/>
</dbReference>
<dbReference type="GO" id="GO:1901588">
    <property type="term" value="C:dendritic microtubule"/>
    <property type="evidence" value="ECO:0007669"/>
    <property type="project" value="Ensembl"/>
</dbReference>
<dbReference type="GO" id="GO:0101031">
    <property type="term" value="C:protein folding chaperone complex"/>
    <property type="evidence" value="ECO:0000353"/>
    <property type="project" value="ARUK-UCL"/>
</dbReference>
<dbReference type="GO" id="GO:0000774">
    <property type="term" value="F:adenyl-nucleotide exchange factor activity"/>
    <property type="evidence" value="ECO:0000314"/>
    <property type="project" value="UniProtKB"/>
</dbReference>
<dbReference type="GO" id="GO:0031072">
    <property type="term" value="F:heat shock protein binding"/>
    <property type="evidence" value="ECO:0007669"/>
    <property type="project" value="Ensembl"/>
</dbReference>
<dbReference type="GO" id="GO:0042802">
    <property type="term" value="F:identical protein binding"/>
    <property type="evidence" value="ECO:0000353"/>
    <property type="project" value="IntAct"/>
</dbReference>
<dbReference type="GO" id="GO:0051087">
    <property type="term" value="F:protein-folding chaperone binding"/>
    <property type="evidence" value="ECO:0000353"/>
    <property type="project" value="ARUK-UCL"/>
</dbReference>
<dbReference type="GO" id="GO:0048156">
    <property type="term" value="F:tau protein binding"/>
    <property type="evidence" value="ECO:0000303"/>
    <property type="project" value="ARUK-UCL"/>
</dbReference>
<dbReference type="GO" id="GO:0044325">
    <property type="term" value="F:transmembrane transporter binding"/>
    <property type="evidence" value="ECO:0000353"/>
    <property type="project" value="ARUK-UCL"/>
</dbReference>
<dbReference type="GO" id="GO:0031625">
    <property type="term" value="F:ubiquitin protein ligase binding"/>
    <property type="evidence" value="ECO:0007669"/>
    <property type="project" value="Ensembl"/>
</dbReference>
<dbReference type="GO" id="GO:0031397">
    <property type="term" value="P:negative regulation of protein ubiquitination"/>
    <property type="evidence" value="ECO:0000314"/>
    <property type="project" value="ARUK-UCL"/>
</dbReference>
<dbReference type="GO" id="GO:1901800">
    <property type="term" value="P:positive regulation of proteasomal protein catabolic process"/>
    <property type="evidence" value="ECO:0000250"/>
    <property type="project" value="ARUK-UCL"/>
</dbReference>
<dbReference type="GO" id="GO:0010954">
    <property type="term" value="P:positive regulation of protein processing"/>
    <property type="evidence" value="ECO:0000315"/>
    <property type="project" value="ARUK-UCL"/>
</dbReference>
<dbReference type="GO" id="GO:0006457">
    <property type="term" value="P:protein folding"/>
    <property type="evidence" value="ECO:0000304"/>
    <property type="project" value="ProtInc"/>
</dbReference>
<dbReference type="GO" id="GO:0019538">
    <property type="term" value="P:protein metabolic process"/>
    <property type="evidence" value="ECO:0000314"/>
    <property type="project" value="MGI"/>
</dbReference>
<dbReference type="GO" id="GO:0050821">
    <property type="term" value="P:protein stabilization"/>
    <property type="evidence" value="ECO:0000314"/>
    <property type="project" value="ARUK-UCL"/>
</dbReference>
<dbReference type="FunFam" id="1.20.58.890:FF:000001">
    <property type="entry name" value="BAG family molecular chaperone regulator 2"/>
    <property type="match status" value="1"/>
</dbReference>
<dbReference type="Gene3D" id="1.20.58.890">
    <property type="match status" value="1"/>
</dbReference>
<dbReference type="InterPro" id="IPR037689">
    <property type="entry name" value="BAG2"/>
</dbReference>
<dbReference type="InterPro" id="IPR003103">
    <property type="entry name" value="BAG_domain"/>
</dbReference>
<dbReference type="PANTHER" id="PTHR12334">
    <property type="entry name" value="BAG FAMILY MOLECULAR CHAPERONE REGULATOR 2"/>
    <property type="match status" value="1"/>
</dbReference>
<dbReference type="PANTHER" id="PTHR12334:SF6">
    <property type="entry name" value="BAG FAMILY MOLECULAR CHAPERONE REGULATOR 2"/>
    <property type="match status" value="1"/>
</dbReference>
<dbReference type="SMART" id="SM00264">
    <property type="entry name" value="BAG"/>
    <property type="match status" value="1"/>
</dbReference>
<dbReference type="PROSITE" id="PS51035">
    <property type="entry name" value="BAG"/>
    <property type="match status" value="1"/>
</dbReference>
<accession>O95816</accession>
<accession>B4DXE2</accession>
<accession>Q08AS9</accession>
<accession>Q6FID0</accession>
<comment type="function">
    <text evidence="3 6">Co-chaperone for HSP70 and HSC70 chaperone proteins. Acts as a nucleotide-exchange factor (NEF) promoting the release of ADP from the HSP70 and HSC70 proteins thereby triggering client/substrate protein release (PubMed:24318877, PubMed:9873016).</text>
</comment>
<comment type="subunit">
    <text evidence="3 4 5 6">Binds to the ATPase domain of HSP/HSC70 chaperones (PubMed:9873016). May interact with NWD1 (PubMed:24681825). Interacts with HSPA1A (via NBD), HSPA1B (via NBD) and HSPA8 (PubMed:24318877). May interact with DNJC9; the interaction seems to be histone-dependent (PubMed:33857403).</text>
</comment>
<comment type="interaction">
    <interactant intactId="EBI-355275">
        <id>O95816</id>
    </interactant>
    <interactant intactId="EBI-930964">
        <id>P54253</id>
        <label>ATXN1</label>
    </interactant>
    <organismsDiffer>false</organismsDiffer>
    <experiments>4</experiments>
</comment>
<comment type="interaction">
    <interactant intactId="EBI-355275">
        <id>O95816</id>
    </interactant>
    <interactant intactId="EBI-355275">
        <id>O95816</id>
        <label>BAG2</label>
    </interactant>
    <organismsDiffer>false</organismsDiffer>
    <experiments>3</experiments>
</comment>
<comment type="interaction">
    <interactant intactId="EBI-355275">
        <id>O95816</id>
    </interactant>
    <interactant intactId="EBI-358616">
        <id>P53355</id>
        <label>DAPK1</label>
    </interactant>
    <organismsDiffer>false</organismsDiffer>
    <experiments>3</experiments>
</comment>
<comment type="interaction">
    <interactant intactId="EBI-355275">
        <id>O95816</id>
    </interactant>
    <interactant intactId="EBI-11988027">
        <id>Q9NRI5-2</id>
        <label>DISC1</label>
    </interactant>
    <organismsDiffer>false</organismsDiffer>
    <experiments>3</experiments>
</comment>
<comment type="interaction">
    <interactant intactId="EBI-355275">
        <id>O95816</id>
    </interactant>
    <interactant intactId="EBI-357552">
        <id>Q99615</id>
        <label>DNAJC7</label>
    </interactant>
    <organismsDiffer>false</organismsDiffer>
    <experiments>4</experiments>
</comment>
<comment type="interaction">
    <interactant intactId="EBI-355275">
        <id>O95816</id>
    </interactant>
    <interactant intactId="EBI-2556750">
        <id>Q03933</id>
        <label>HSF2</label>
    </interactant>
    <organismsDiffer>false</organismsDiffer>
    <experiments>2</experiments>
</comment>
<comment type="interaction">
    <interactant intactId="EBI-355275">
        <id>O95816</id>
    </interactant>
    <interactant intactId="EBI-351896">
        <id>P11142</id>
        <label>HSPA8</label>
    </interactant>
    <organismsDiffer>false</organismsDiffer>
    <experiments>10</experiments>
</comment>
<comment type="interaction">
    <interactant intactId="EBI-355275">
        <id>O95816</id>
    </interactant>
    <interactant intactId="EBI-5323863">
        <id>Q5S007</id>
        <label>LRRK2</label>
    </interactant>
    <organismsDiffer>false</organismsDiffer>
    <experiments>3</experiments>
</comment>
<comment type="interaction">
    <interactant intactId="EBI-355275">
        <id>O95816</id>
    </interactant>
    <interactant intactId="EBI-1213983">
        <id>Q13164</id>
        <label>MAPK7</label>
    </interactant>
    <organismsDiffer>false</organismsDiffer>
    <experiments>3</experiments>
</comment>
<comment type="interaction">
    <interactant intactId="EBI-355275">
        <id>O95816</id>
    </interactant>
    <interactant intactId="EBI-721328">
        <id>P58340</id>
        <label>MLF1</label>
    </interactant>
    <organismsDiffer>false</organismsDiffer>
    <experiments>2</experiments>
</comment>
<comment type="interaction">
    <interactant intactId="EBI-355275">
        <id>O95816</id>
    </interactant>
    <interactant intactId="EBI-1051875">
        <id>Q15773</id>
        <label>MLF2</label>
    </interactant>
    <organismsDiffer>false</organismsDiffer>
    <experiments>5</experiments>
</comment>
<comment type="interaction">
    <interactant intactId="EBI-355275">
        <id>O95816</id>
    </interactant>
    <interactant intactId="EBI-476586">
        <id>P17612</id>
        <label>PRKACA</label>
    </interactant>
    <organismsDiffer>false</organismsDiffer>
    <experiments>2</experiments>
</comment>
<comment type="interaction">
    <interactant intactId="EBI-355275">
        <id>O95816</id>
    </interactant>
    <interactant intactId="EBI-365996">
        <id>P04049</id>
        <label>RAF1</label>
    </interactant>
    <organismsDiffer>false</organismsDiffer>
    <experiments>12</experiments>
</comment>
<comment type="interaction">
    <interactant intactId="EBI-355275">
        <id>O95816</id>
    </interactant>
    <interactant intactId="EBI-9361206">
        <id>O95072</id>
        <label>REC8</label>
    </interactant>
    <organismsDiffer>false</organismsDiffer>
    <experiments>2</experiments>
</comment>
<comment type="interaction">
    <interactant intactId="EBI-355275">
        <id>O95816</id>
    </interactant>
    <interactant intactId="EBI-347996">
        <id>O43765</id>
        <label>SGTA</label>
    </interactant>
    <organismsDiffer>false</organismsDiffer>
    <experiments>2</experiments>
</comment>
<comment type="interaction">
    <interactant intactId="EBI-355275">
        <id>O95816</id>
    </interactant>
    <interactant intactId="EBI-357085">
        <id>Q9UNE7</id>
        <label>STUB1</label>
    </interactant>
    <organismsDiffer>false</organismsDiffer>
    <experiments>5</experiments>
</comment>
<comment type="interaction">
    <interactant intactId="EBI-355275">
        <id>O95816</id>
    </interactant>
    <interactant intactId="EBI-9356686">
        <id>Q96BE0</id>
    </interactant>
    <organismsDiffer>false</organismsDiffer>
    <experiments>2</experiments>
</comment>
<comment type="interaction">
    <interactant intactId="EBI-355275">
        <id>O95816</id>
    </interactant>
    <interactant intactId="EBI-1185167">
        <id>Q8AZK7</id>
        <label>EBNA-LP</label>
    </interactant>
    <organismsDiffer>true</organismsDiffer>
    <experiments>3</experiments>
</comment>
<comment type="alternative products">
    <event type="alternative splicing"/>
    <isoform>
        <id>O95816-1</id>
        <name>1</name>
        <sequence type="displayed"/>
    </isoform>
    <isoform>
        <id>O95816-2</id>
        <name>2</name>
        <sequence type="described" ref="VSP_056462"/>
    </isoform>
</comment>
<gene>
    <name type="primary">BAG2</name>
</gene>
<sequence length="211" mass="23772">MAQAKINAKANEGRFCRSSSMADRSSRLLESLDQLELRVEALREAATAVEQEKEILLEMIHSIQNSQDMRQISDGEREELNLTANRLMGRTLTVEVSVETIRNPQQQESLKHATRIIDEVVNKFLDDLGNAKSHLMSLYSACSSEVPHGPVDQKFQSIVIGCALEDQKKIKRRLETLLRNIENSDKAIKLLEHSKGAGSKTLQQNAESRFN</sequence>
<protein>
    <recommendedName>
        <fullName>BAG family molecular chaperone regulator 2</fullName>
        <shortName>BAG-2</shortName>
    </recommendedName>
    <alternativeName>
        <fullName>Bcl-2-associated athanogene 2</fullName>
    </alternativeName>
</protein>
<reference key="1">
    <citation type="journal article" date="1999" name="J. Biol. Chem.">
        <title>An evolutionarily conserved family of Hsp70/Hsc70 molecular chaperone regulators.</title>
        <authorList>
            <person name="Takayama S."/>
            <person name="Xie Z."/>
            <person name="Reed J.C."/>
        </authorList>
    </citation>
    <scope>NUCLEOTIDE SEQUENCE [MRNA] (ISOFORM 1)</scope>
    <scope>FUNCTION</scope>
    <scope>INTERACTION WITH HSP70/HSC70 CHAPERONES</scope>
</reference>
<reference key="2">
    <citation type="journal article" date="2001" name="Genome Res.">
        <title>Towards a catalog of human genes and proteins: sequencing and analysis of 500 novel complete protein coding human cDNAs.</title>
        <authorList>
            <person name="Wiemann S."/>
            <person name="Weil B."/>
            <person name="Wellenreuther R."/>
            <person name="Gassenhuber J."/>
            <person name="Glassl S."/>
            <person name="Ansorge W."/>
            <person name="Boecher M."/>
            <person name="Bloecker H."/>
            <person name="Bauersachs S."/>
            <person name="Blum H."/>
            <person name="Lauber J."/>
            <person name="Duesterhoeft A."/>
            <person name="Beyer A."/>
            <person name="Koehrer K."/>
            <person name="Strack N."/>
            <person name="Mewes H.-W."/>
            <person name="Ottenwaelder B."/>
            <person name="Obermaier B."/>
            <person name="Tampe J."/>
            <person name="Heubner D."/>
            <person name="Wambutt R."/>
            <person name="Korn B."/>
            <person name="Klein M."/>
            <person name="Poustka A."/>
        </authorList>
    </citation>
    <scope>NUCLEOTIDE SEQUENCE [LARGE SCALE MRNA] (ISOFORM 1)</scope>
    <source>
        <tissue>Uterus</tissue>
    </source>
</reference>
<reference key="3">
    <citation type="journal article" date="2004" name="Nat. Genet.">
        <title>Complete sequencing and characterization of 21,243 full-length human cDNAs.</title>
        <authorList>
            <person name="Ota T."/>
            <person name="Suzuki Y."/>
            <person name="Nishikawa T."/>
            <person name="Otsuki T."/>
            <person name="Sugiyama T."/>
            <person name="Irie R."/>
            <person name="Wakamatsu A."/>
            <person name="Hayashi K."/>
            <person name="Sato H."/>
            <person name="Nagai K."/>
            <person name="Kimura K."/>
            <person name="Makita H."/>
            <person name="Sekine M."/>
            <person name="Obayashi M."/>
            <person name="Nishi T."/>
            <person name="Shibahara T."/>
            <person name="Tanaka T."/>
            <person name="Ishii S."/>
            <person name="Yamamoto J."/>
            <person name="Saito K."/>
            <person name="Kawai Y."/>
            <person name="Isono Y."/>
            <person name="Nakamura Y."/>
            <person name="Nagahari K."/>
            <person name="Murakami K."/>
            <person name="Yasuda T."/>
            <person name="Iwayanagi T."/>
            <person name="Wagatsuma M."/>
            <person name="Shiratori A."/>
            <person name="Sudo H."/>
            <person name="Hosoiri T."/>
            <person name="Kaku Y."/>
            <person name="Kodaira H."/>
            <person name="Kondo H."/>
            <person name="Sugawara M."/>
            <person name="Takahashi M."/>
            <person name="Kanda K."/>
            <person name="Yokoi T."/>
            <person name="Furuya T."/>
            <person name="Kikkawa E."/>
            <person name="Omura Y."/>
            <person name="Abe K."/>
            <person name="Kamihara K."/>
            <person name="Katsuta N."/>
            <person name="Sato K."/>
            <person name="Tanikawa M."/>
            <person name="Yamazaki M."/>
            <person name="Ninomiya K."/>
            <person name="Ishibashi T."/>
            <person name="Yamashita H."/>
            <person name="Murakawa K."/>
            <person name="Fujimori K."/>
            <person name="Tanai H."/>
            <person name="Kimata M."/>
            <person name="Watanabe M."/>
            <person name="Hiraoka S."/>
            <person name="Chiba Y."/>
            <person name="Ishida S."/>
            <person name="Ono Y."/>
            <person name="Takiguchi S."/>
            <person name="Watanabe S."/>
            <person name="Yosida M."/>
            <person name="Hotuta T."/>
            <person name="Kusano J."/>
            <person name="Kanehori K."/>
            <person name="Takahashi-Fujii A."/>
            <person name="Hara H."/>
            <person name="Tanase T.-O."/>
            <person name="Nomura Y."/>
            <person name="Togiya S."/>
            <person name="Komai F."/>
            <person name="Hara R."/>
            <person name="Takeuchi K."/>
            <person name="Arita M."/>
            <person name="Imose N."/>
            <person name="Musashino K."/>
            <person name="Yuuki H."/>
            <person name="Oshima A."/>
            <person name="Sasaki N."/>
            <person name="Aotsuka S."/>
            <person name="Yoshikawa Y."/>
            <person name="Matsunawa H."/>
            <person name="Ichihara T."/>
            <person name="Shiohata N."/>
            <person name="Sano S."/>
            <person name="Moriya S."/>
            <person name="Momiyama H."/>
            <person name="Satoh N."/>
            <person name="Takami S."/>
            <person name="Terashima Y."/>
            <person name="Suzuki O."/>
            <person name="Nakagawa S."/>
            <person name="Senoh A."/>
            <person name="Mizoguchi H."/>
            <person name="Goto Y."/>
            <person name="Shimizu F."/>
            <person name="Wakebe H."/>
            <person name="Hishigaki H."/>
            <person name="Watanabe T."/>
            <person name="Sugiyama A."/>
            <person name="Takemoto M."/>
            <person name="Kawakami B."/>
            <person name="Yamazaki M."/>
            <person name="Watanabe K."/>
            <person name="Kumagai A."/>
            <person name="Itakura S."/>
            <person name="Fukuzumi Y."/>
            <person name="Fujimori Y."/>
            <person name="Komiyama M."/>
            <person name="Tashiro H."/>
            <person name="Tanigami A."/>
            <person name="Fujiwara T."/>
            <person name="Ono T."/>
            <person name="Yamada K."/>
            <person name="Fujii Y."/>
            <person name="Ozaki K."/>
            <person name="Hirao M."/>
            <person name="Ohmori Y."/>
            <person name="Kawabata A."/>
            <person name="Hikiji T."/>
            <person name="Kobatake N."/>
            <person name="Inagaki H."/>
            <person name="Ikema Y."/>
            <person name="Okamoto S."/>
            <person name="Okitani R."/>
            <person name="Kawakami T."/>
            <person name="Noguchi S."/>
            <person name="Itoh T."/>
            <person name="Shigeta K."/>
            <person name="Senba T."/>
            <person name="Matsumura K."/>
            <person name="Nakajima Y."/>
            <person name="Mizuno T."/>
            <person name="Morinaga M."/>
            <person name="Sasaki M."/>
            <person name="Togashi T."/>
            <person name="Oyama M."/>
            <person name="Hata H."/>
            <person name="Watanabe M."/>
            <person name="Komatsu T."/>
            <person name="Mizushima-Sugano J."/>
            <person name="Satoh T."/>
            <person name="Shirai Y."/>
            <person name="Takahashi Y."/>
            <person name="Nakagawa K."/>
            <person name="Okumura K."/>
            <person name="Nagase T."/>
            <person name="Nomura N."/>
            <person name="Kikuchi H."/>
            <person name="Masuho Y."/>
            <person name="Yamashita R."/>
            <person name="Nakai K."/>
            <person name="Yada T."/>
            <person name="Nakamura Y."/>
            <person name="Ohara O."/>
            <person name="Isogai T."/>
            <person name="Sugano S."/>
        </authorList>
    </citation>
    <scope>NUCLEOTIDE SEQUENCE [LARGE SCALE MRNA] (ISOFORM 2)</scope>
    <source>
        <tissue>Testis</tissue>
    </source>
</reference>
<reference key="4">
    <citation type="submission" date="2004-06" db="EMBL/GenBank/DDBJ databases">
        <title>Cloning of human full open reading frames in Gateway(TM) system entry vector (pDONR201).</title>
        <authorList>
            <person name="Ebert L."/>
            <person name="Schick M."/>
            <person name="Neubert P."/>
            <person name="Schatten R."/>
            <person name="Henze S."/>
            <person name="Korn B."/>
        </authorList>
    </citation>
    <scope>NUCLEOTIDE SEQUENCE [LARGE SCALE MRNA] (ISOFORM 1)</scope>
</reference>
<reference key="5">
    <citation type="journal article" date="2003" name="Nature">
        <title>The DNA sequence and analysis of human chromosome 6.</title>
        <authorList>
            <person name="Mungall A.J."/>
            <person name="Palmer S.A."/>
            <person name="Sims S.K."/>
            <person name="Edwards C.A."/>
            <person name="Ashurst J.L."/>
            <person name="Wilming L."/>
            <person name="Jones M.C."/>
            <person name="Horton R."/>
            <person name="Hunt S.E."/>
            <person name="Scott C.E."/>
            <person name="Gilbert J.G.R."/>
            <person name="Clamp M.E."/>
            <person name="Bethel G."/>
            <person name="Milne S."/>
            <person name="Ainscough R."/>
            <person name="Almeida J.P."/>
            <person name="Ambrose K.D."/>
            <person name="Andrews T.D."/>
            <person name="Ashwell R.I.S."/>
            <person name="Babbage A.K."/>
            <person name="Bagguley C.L."/>
            <person name="Bailey J."/>
            <person name="Banerjee R."/>
            <person name="Barker D.J."/>
            <person name="Barlow K.F."/>
            <person name="Bates K."/>
            <person name="Beare D.M."/>
            <person name="Beasley H."/>
            <person name="Beasley O."/>
            <person name="Bird C.P."/>
            <person name="Blakey S.E."/>
            <person name="Bray-Allen S."/>
            <person name="Brook J."/>
            <person name="Brown A.J."/>
            <person name="Brown J.Y."/>
            <person name="Burford D.C."/>
            <person name="Burrill W."/>
            <person name="Burton J."/>
            <person name="Carder C."/>
            <person name="Carter N.P."/>
            <person name="Chapman J.C."/>
            <person name="Clark S.Y."/>
            <person name="Clark G."/>
            <person name="Clee C.M."/>
            <person name="Clegg S."/>
            <person name="Cobley V."/>
            <person name="Collier R.E."/>
            <person name="Collins J.E."/>
            <person name="Colman L.K."/>
            <person name="Corby N.R."/>
            <person name="Coville G.J."/>
            <person name="Culley K.M."/>
            <person name="Dhami P."/>
            <person name="Davies J."/>
            <person name="Dunn M."/>
            <person name="Earthrowl M.E."/>
            <person name="Ellington A.E."/>
            <person name="Evans K.A."/>
            <person name="Faulkner L."/>
            <person name="Francis M.D."/>
            <person name="Frankish A."/>
            <person name="Frankland J."/>
            <person name="French L."/>
            <person name="Garner P."/>
            <person name="Garnett J."/>
            <person name="Ghori M.J."/>
            <person name="Gilby L.M."/>
            <person name="Gillson C.J."/>
            <person name="Glithero R.J."/>
            <person name="Grafham D.V."/>
            <person name="Grant M."/>
            <person name="Gribble S."/>
            <person name="Griffiths C."/>
            <person name="Griffiths M.N.D."/>
            <person name="Hall R."/>
            <person name="Halls K.S."/>
            <person name="Hammond S."/>
            <person name="Harley J.L."/>
            <person name="Hart E.A."/>
            <person name="Heath P.D."/>
            <person name="Heathcott R."/>
            <person name="Holmes S.J."/>
            <person name="Howden P.J."/>
            <person name="Howe K.L."/>
            <person name="Howell G.R."/>
            <person name="Huckle E."/>
            <person name="Humphray S.J."/>
            <person name="Humphries M.D."/>
            <person name="Hunt A.R."/>
            <person name="Johnson C.M."/>
            <person name="Joy A.A."/>
            <person name="Kay M."/>
            <person name="Keenan S.J."/>
            <person name="Kimberley A.M."/>
            <person name="King A."/>
            <person name="Laird G.K."/>
            <person name="Langford C."/>
            <person name="Lawlor S."/>
            <person name="Leongamornlert D.A."/>
            <person name="Leversha M."/>
            <person name="Lloyd C.R."/>
            <person name="Lloyd D.M."/>
            <person name="Loveland J.E."/>
            <person name="Lovell J."/>
            <person name="Martin S."/>
            <person name="Mashreghi-Mohammadi M."/>
            <person name="Maslen G.L."/>
            <person name="Matthews L."/>
            <person name="McCann O.T."/>
            <person name="McLaren S.J."/>
            <person name="McLay K."/>
            <person name="McMurray A."/>
            <person name="Moore M.J.F."/>
            <person name="Mullikin J.C."/>
            <person name="Niblett D."/>
            <person name="Nickerson T."/>
            <person name="Novik K.L."/>
            <person name="Oliver K."/>
            <person name="Overton-Larty E.K."/>
            <person name="Parker A."/>
            <person name="Patel R."/>
            <person name="Pearce A.V."/>
            <person name="Peck A.I."/>
            <person name="Phillimore B.J.C.T."/>
            <person name="Phillips S."/>
            <person name="Plumb R.W."/>
            <person name="Porter K.M."/>
            <person name="Ramsey Y."/>
            <person name="Ranby S.A."/>
            <person name="Rice C.M."/>
            <person name="Ross M.T."/>
            <person name="Searle S.M."/>
            <person name="Sehra H.K."/>
            <person name="Sheridan E."/>
            <person name="Skuce C.D."/>
            <person name="Smith S."/>
            <person name="Smith M."/>
            <person name="Spraggon L."/>
            <person name="Squares S.L."/>
            <person name="Steward C.A."/>
            <person name="Sycamore N."/>
            <person name="Tamlyn-Hall G."/>
            <person name="Tester J."/>
            <person name="Theaker A.J."/>
            <person name="Thomas D.W."/>
            <person name="Thorpe A."/>
            <person name="Tracey A."/>
            <person name="Tromans A."/>
            <person name="Tubby B."/>
            <person name="Wall M."/>
            <person name="Wallis J.M."/>
            <person name="West A.P."/>
            <person name="White S.S."/>
            <person name="Whitehead S.L."/>
            <person name="Whittaker H."/>
            <person name="Wild A."/>
            <person name="Willey D.J."/>
            <person name="Wilmer T.E."/>
            <person name="Wood J.M."/>
            <person name="Wray P.W."/>
            <person name="Wyatt J.C."/>
            <person name="Young L."/>
            <person name="Younger R.M."/>
            <person name="Bentley D.R."/>
            <person name="Coulson A."/>
            <person name="Durbin R.M."/>
            <person name="Hubbard T."/>
            <person name="Sulston J.E."/>
            <person name="Dunham I."/>
            <person name="Rogers J."/>
            <person name="Beck S."/>
        </authorList>
    </citation>
    <scope>NUCLEOTIDE SEQUENCE [LARGE SCALE GENOMIC DNA]</scope>
</reference>
<reference key="6">
    <citation type="journal article" date="2004" name="Genome Res.">
        <title>The status, quality, and expansion of the NIH full-length cDNA project: the Mammalian Gene Collection (MGC).</title>
        <authorList>
            <consortium name="The MGC Project Team"/>
        </authorList>
    </citation>
    <scope>NUCLEOTIDE SEQUENCE [LARGE SCALE MRNA] (ISOFORM 1)</scope>
</reference>
<reference key="7">
    <citation type="journal article" date="2008" name="Mol. Cell">
        <title>Kinase-selective enrichment enables quantitative phosphoproteomics of the kinome across the cell cycle.</title>
        <authorList>
            <person name="Daub H."/>
            <person name="Olsen J.V."/>
            <person name="Bairlein M."/>
            <person name="Gnad F."/>
            <person name="Oppermann F.S."/>
            <person name="Korner R."/>
            <person name="Greff Z."/>
            <person name="Keri G."/>
            <person name="Stemmann O."/>
            <person name="Mann M."/>
        </authorList>
    </citation>
    <scope>PHOSPHORYLATION [LARGE SCALE ANALYSIS] AT SER-73</scope>
    <scope>IDENTIFICATION BY MASS SPECTROMETRY [LARGE SCALE ANALYSIS]</scope>
    <source>
        <tissue>Cervix carcinoma</tissue>
    </source>
</reference>
<reference key="8">
    <citation type="journal article" date="2010" name="Sci. Signal.">
        <title>Quantitative phosphoproteomics reveals widespread full phosphorylation site occupancy during mitosis.</title>
        <authorList>
            <person name="Olsen J.V."/>
            <person name="Vermeulen M."/>
            <person name="Santamaria A."/>
            <person name="Kumar C."/>
            <person name="Miller M.L."/>
            <person name="Jensen L.J."/>
            <person name="Gnad F."/>
            <person name="Cox J."/>
            <person name="Jensen T.S."/>
            <person name="Nigg E.A."/>
            <person name="Brunak S."/>
            <person name="Mann M."/>
        </authorList>
    </citation>
    <scope>PHOSPHORYLATION [LARGE SCALE ANALYSIS] AT SER-20</scope>
    <scope>IDENTIFICATION BY MASS SPECTROMETRY [LARGE SCALE ANALYSIS]</scope>
    <source>
        <tissue>Cervix carcinoma</tissue>
    </source>
</reference>
<reference key="9">
    <citation type="journal article" date="2011" name="BMC Syst. Biol.">
        <title>Initial characterization of the human central proteome.</title>
        <authorList>
            <person name="Burkard T.R."/>
            <person name="Planyavsky M."/>
            <person name="Kaupe I."/>
            <person name="Breitwieser F.P."/>
            <person name="Buerckstuemmer T."/>
            <person name="Bennett K.L."/>
            <person name="Superti-Furga G."/>
            <person name="Colinge J."/>
        </authorList>
    </citation>
    <scope>IDENTIFICATION BY MASS SPECTROMETRY [LARGE SCALE ANALYSIS]</scope>
</reference>
<reference key="10">
    <citation type="journal article" date="2012" name="Proc. Natl. Acad. Sci. U.S.A.">
        <title>N-terminal acetylome analyses and functional insights of the N-terminal acetyltransferase NatB.</title>
        <authorList>
            <person name="Van Damme P."/>
            <person name="Lasa M."/>
            <person name="Polevoda B."/>
            <person name="Gazquez C."/>
            <person name="Elosegui-Artola A."/>
            <person name="Kim D.S."/>
            <person name="De Juan-Pardo E."/>
            <person name="Demeyer K."/>
            <person name="Hole K."/>
            <person name="Larrea E."/>
            <person name="Timmerman E."/>
            <person name="Prieto J."/>
            <person name="Arnesen T."/>
            <person name="Sherman F."/>
            <person name="Gevaert K."/>
            <person name="Aldabe R."/>
        </authorList>
    </citation>
    <scope>ACETYLATION [LARGE SCALE ANALYSIS] AT ALA-2</scope>
    <scope>CLEAVAGE OF INITIATOR METHIONINE [LARGE SCALE ANALYSIS]</scope>
    <scope>IDENTIFICATION BY MASS SPECTROMETRY [LARGE SCALE ANALYSIS]</scope>
</reference>
<reference key="11">
    <citation type="journal article" date="2013" name="J. Proteome Res.">
        <title>Toward a comprehensive characterization of a human cancer cell phosphoproteome.</title>
        <authorList>
            <person name="Zhou H."/>
            <person name="Di Palma S."/>
            <person name="Preisinger C."/>
            <person name="Peng M."/>
            <person name="Polat A.N."/>
            <person name="Heck A.J."/>
            <person name="Mohammed S."/>
        </authorList>
    </citation>
    <scope>PHOSPHORYLATION [LARGE SCALE ANALYSIS] AT SER-31 AND SER-73</scope>
    <scope>IDENTIFICATION BY MASS SPECTROMETRY [LARGE SCALE ANALYSIS]</scope>
    <source>
        <tissue>Cervix carcinoma</tissue>
        <tissue>Erythroleukemia</tissue>
    </source>
</reference>
<reference key="12">
    <citation type="journal article" date="2014" name="J. Biol. Chem.">
        <title>Binding of human nucleotide exchange factors to heat shock protein 70 (Hsp70) generates functionally distinct complexes in vitro.</title>
        <authorList>
            <person name="Rauch J.N."/>
            <person name="Gestwicki J.E."/>
        </authorList>
    </citation>
    <scope>FUNCTION</scope>
    <scope>INTERACTION WITH HSPA1A; HSPA1B AND HSPA8</scope>
</reference>
<reference key="13">
    <citation type="journal article" date="2014" name="J. Proteomics">
        <title>An enzyme assisted RP-RPLC approach for in-depth analysis of human liver phosphoproteome.</title>
        <authorList>
            <person name="Bian Y."/>
            <person name="Song C."/>
            <person name="Cheng K."/>
            <person name="Dong M."/>
            <person name="Wang F."/>
            <person name="Huang J."/>
            <person name="Sun D."/>
            <person name="Wang L."/>
            <person name="Ye M."/>
            <person name="Zou H."/>
        </authorList>
    </citation>
    <scope>IDENTIFICATION BY MASS SPECTROMETRY [LARGE SCALE ANALYSIS]</scope>
    <source>
        <tissue>Liver</tissue>
    </source>
</reference>
<reference key="14">
    <citation type="journal article" date="2014" name="Oncotarget">
        <title>The NLR-related protein NWD1 is associated with prostate cancer and modulates androgen receptor signaling.</title>
        <authorList>
            <person name="Correa R.G."/>
            <person name="Krajewska M."/>
            <person name="Ware C.F."/>
            <person name="Gerlic M."/>
            <person name="Reed J.C."/>
        </authorList>
    </citation>
    <scope>INTERACTION WITH NWD1</scope>
</reference>
<reference key="15">
    <citation type="journal article" date="2015" name="Proteomics">
        <title>N-terminome analysis of the human mitochondrial proteome.</title>
        <authorList>
            <person name="Vaca Jacome A.S."/>
            <person name="Rabilloud T."/>
            <person name="Schaeffer-Reiss C."/>
            <person name="Rompais M."/>
            <person name="Ayoub D."/>
            <person name="Lane L."/>
            <person name="Bairoch A."/>
            <person name="Van Dorsselaer A."/>
            <person name="Carapito C."/>
        </authorList>
    </citation>
    <scope>IDENTIFICATION BY MASS SPECTROMETRY [LARGE SCALE ANALYSIS]</scope>
</reference>
<reference key="16">
    <citation type="journal article" date="2021" name="Mol. Cell">
        <title>DNAJC9 integrates heat shock molecular chaperones into the histone chaperone network.</title>
        <authorList>
            <person name="Hammond C.M."/>
            <person name="Bao H."/>
            <person name="Hendriks I.A."/>
            <person name="Carraro M."/>
            <person name="Garcia-Nieto A."/>
            <person name="Liu Y."/>
            <person name="Reveron-Gomez N."/>
            <person name="Spanos C."/>
            <person name="Chen L."/>
            <person name="Rappsilber J."/>
            <person name="Nielsen M.L."/>
            <person name="Patel D.J."/>
            <person name="Huang H."/>
            <person name="Groth A."/>
        </authorList>
    </citation>
    <scope>INTERACTION WITH DNJC9</scope>
</reference>